<proteinExistence type="inferred from homology"/>
<name>ISCR_SALA4</name>
<sequence>MRLTSKGRYAVTAMLDVALNSEAGPVPLADISERQGISLSYLEQLFSRLRKNGLVSSVRGPGGGYLLGKDAGSIAVGEVISAVDESVDATRCQGKGGCQGGDKCLTHALWRDLSDRLTGFLNNITLGELVNNQEVLDVSGRQHTHDAPRASSRAQDAIDVKLRA</sequence>
<organism>
    <name type="scientific">Salmonella agona (strain SL483)</name>
    <dbReference type="NCBI Taxonomy" id="454166"/>
    <lineage>
        <taxon>Bacteria</taxon>
        <taxon>Pseudomonadati</taxon>
        <taxon>Pseudomonadota</taxon>
        <taxon>Gammaproteobacteria</taxon>
        <taxon>Enterobacterales</taxon>
        <taxon>Enterobacteriaceae</taxon>
        <taxon>Salmonella</taxon>
    </lineage>
</organism>
<reference key="1">
    <citation type="journal article" date="2011" name="J. Bacteriol.">
        <title>Comparative genomics of 28 Salmonella enterica isolates: evidence for CRISPR-mediated adaptive sublineage evolution.</title>
        <authorList>
            <person name="Fricke W.F."/>
            <person name="Mammel M.K."/>
            <person name="McDermott P.F."/>
            <person name="Tartera C."/>
            <person name="White D.G."/>
            <person name="Leclerc J.E."/>
            <person name="Ravel J."/>
            <person name="Cebula T.A."/>
        </authorList>
    </citation>
    <scope>NUCLEOTIDE SEQUENCE [LARGE SCALE GENOMIC DNA]</scope>
    <source>
        <strain>SL483</strain>
    </source>
</reference>
<gene>
    <name evidence="1" type="primary">iscR</name>
    <name type="ordered locus">SeAg_B2699</name>
</gene>
<protein>
    <recommendedName>
        <fullName evidence="1">HTH-type transcriptional regulator IscR</fullName>
    </recommendedName>
</protein>
<evidence type="ECO:0000255" key="1">
    <source>
        <dbReference type="HAMAP-Rule" id="MF_01176"/>
    </source>
</evidence>
<keyword id="KW-0001">2Fe-2S</keyword>
<keyword id="KW-0010">Activator</keyword>
<keyword id="KW-0238">DNA-binding</keyword>
<keyword id="KW-0408">Iron</keyword>
<keyword id="KW-0411">Iron-sulfur</keyword>
<keyword id="KW-0479">Metal-binding</keyword>
<keyword id="KW-0678">Repressor</keyword>
<keyword id="KW-0804">Transcription</keyword>
<keyword id="KW-0805">Transcription regulation</keyword>
<dbReference type="EMBL" id="CP001138">
    <property type="protein sequence ID" value="ACH52534.1"/>
    <property type="molecule type" value="Genomic_DNA"/>
</dbReference>
<dbReference type="RefSeq" id="WP_001241348.1">
    <property type="nucleotide sequence ID" value="NC_011149.1"/>
</dbReference>
<dbReference type="SMR" id="B5F1C1"/>
<dbReference type="KEGG" id="sea:SeAg_B2699"/>
<dbReference type="HOGENOM" id="CLU_107144_0_0_6"/>
<dbReference type="Proteomes" id="UP000008819">
    <property type="component" value="Chromosome"/>
</dbReference>
<dbReference type="GO" id="GO:0005829">
    <property type="term" value="C:cytosol"/>
    <property type="evidence" value="ECO:0007669"/>
    <property type="project" value="TreeGrafter"/>
</dbReference>
<dbReference type="GO" id="GO:0051537">
    <property type="term" value="F:2 iron, 2 sulfur cluster binding"/>
    <property type="evidence" value="ECO:0007669"/>
    <property type="project" value="UniProtKB-KW"/>
</dbReference>
<dbReference type="GO" id="GO:0003700">
    <property type="term" value="F:DNA-binding transcription factor activity"/>
    <property type="evidence" value="ECO:0007669"/>
    <property type="project" value="UniProtKB-UniRule"/>
</dbReference>
<dbReference type="GO" id="GO:0003690">
    <property type="term" value="F:double-stranded DNA binding"/>
    <property type="evidence" value="ECO:0007669"/>
    <property type="project" value="UniProtKB-UniRule"/>
</dbReference>
<dbReference type="GO" id="GO:0005506">
    <property type="term" value="F:iron ion binding"/>
    <property type="evidence" value="ECO:0007669"/>
    <property type="project" value="UniProtKB-UniRule"/>
</dbReference>
<dbReference type="FunFam" id="1.10.10.10:FF:000026">
    <property type="entry name" value="HTH-type transcriptional regulator IscR"/>
    <property type="match status" value="1"/>
</dbReference>
<dbReference type="Gene3D" id="1.10.10.10">
    <property type="entry name" value="Winged helix-like DNA-binding domain superfamily/Winged helix DNA-binding domain"/>
    <property type="match status" value="1"/>
</dbReference>
<dbReference type="HAMAP" id="MF_01176">
    <property type="entry name" value="HTH_type_IscR"/>
    <property type="match status" value="1"/>
</dbReference>
<dbReference type="InterPro" id="IPR010242">
    <property type="entry name" value="TF_HTH_IscR"/>
</dbReference>
<dbReference type="InterPro" id="IPR030489">
    <property type="entry name" value="TR_Rrf2-type_CS"/>
</dbReference>
<dbReference type="InterPro" id="IPR000944">
    <property type="entry name" value="Tscrpt_reg_Rrf2"/>
</dbReference>
<dbReference type="InterPro" id="IPR036388">
    <property type="entry name" value="WH-like_DNA-bd_sf"/>
</dbReference>
<dbReference type="InterPro" id="IPR036390">
    <property type="entry name" value="WH_DNA-bd_sf"/>
</dbReference>
<dbReference type="NCBIfam" id="TIGR02010">
    <property type="entry name" value="IscR"/>
    <property type="match status" value="1"/>
</dbReference>
<dbReference type="NCBIfam" id="NF008110">
    <property type="entry name" value="PRK10857.1"/>
    <property type="match status" value="1"/>
</dbReference>
<dbReference type="NCBIfam" id="TIGR00738">
    <property type="entry name" value="rrf2_super"/>
    <property type="match status" value="1"/>
</dbReference>
<dbReference type="PANTHER" id="PTHR33221:SF5">
    <property type="entry name" value="HTH-TYPE TRANSCRIPTIONAL REGULATOR ISCR"/>
    <property type="match status" value="1"/>
</dbReference>
<dbReference type="PANTHER" id="PTHR33221">
    <property type="entry name" value="WINGED HELIX-TURN-HELIX TRANSCRIPTIONAL REGULATOR, RRF2 FAMILY"/>
    <property type="match status" value="1"/>
</dbReference>
<dbReference type="Pfam" id="PF02082">
    <property type="entry name" value="Rrf2"/>
    <property type="match status" value="1"/>
</dbReference>
<dbReference type="SUPFAM" id="SSF46785">
    <property type="entry name" value="Winged helix' DNA-binding domain"/>
    <property type="match status" value="1"/>
</dbReference>
<dbReference type="PROSITE" id="PS01332">
    <property type="entry name" value="HTH_RRF2_1"/>
    <property type="match status" value="1"/>
</dbReference>
<dbReference type="PROSITE" id="PS51197">
    <property type="entry name" value="HTH_RRF2_2"/>
    <property type="match status" value="1"/>
</dbReference>
<accession>B5F1C1</accession>
<comment type="function">
    <text evidence="1">Regulates the transcription of several operons and genes involved in the biogenesis of Fe-S clusters and Fe-S-containing proteins.</text>
</comment>
<comment type="cofactor">
    <cofactor evidence="1">
        <name>[2Fe-2S] cluster</name>
        <dbReference type="ChEBI" id="CHEBI:190135"/>
    </cofactor>
    <text evidence="1">Binds 1 [2Fe-2S] cluster.</text>
</comment>
<feature type="chain" id="PRO_1000138104" description="HTH-type transcriptional regulator IscR">
    <location>
        <begin position="1"/>
        <end position="164"/>
    </location>
</feature>
<feature type="domain" description="HTH rrf2-type" evidence="1">
    <location>
        <begin position="2"/>
        <end position="131"/>
    </location>
</feature>
<feature type="DNA-binding region" description="H-T-H motif" evidence="1">
    <location>
        <begin position="28"/>
        <end position="51"/>
    </location>
</feature>
<feature type="binding site" evidence="1">
    <location>
        <position position="92"/>
    </location>
    <ligand>
        <name>[2Fe-2S] cluster</name>
        <dbReference type="ChEBI" id="CHEBI:190135"/>
    </ligand>
</feature>
<feature type="binding site" evidence="1">
    <location>
        <position position="98"/>
    </location>
    <ligand>
        <name>[2Fe-2S] cluster</name>
        <dbReference type="ChEBI" id="CHEBI:190135"/>
    </ligand>
</feature>
<feature type="binding site" evidence="1">
    <location>
        <position position="104"/>
    </location>
    <ligand>
        <name>[2Fe-2S] cluster</name>
        <dbReference type="ChEBI" id="CHEBI:190135"/>
    </ligand>
</feature>